<organism>
    <name type="scientific">Koribacter versatilis (strain Ellin345)</name>
    <dbReference type="NCBI Taxonomy" id="204669"/>
    <lineage>
        <taxon>Bacteria</taxon>
        <taxon>Pseudomonadati</taxon>
        <taxon>Acidobacteriota</taxon>
        <taxon>Terriglobia</taxon>
        <taxon>Terriglobales</taxon>
        <taxon>Candidatus Korobacteraceae</taxon>
        <taxon>Candidatus Korobacter</taxon>
    </lineage>
</organism>
<proteinExistence type="inferred from homology"/>
<accession>Q1IPR2</accession>
<reference key="1">
    <citation type="journal article" date="2009" name="Appl. Environ. Microbiol.">
        <title>Three genomes from the phylum Acidobacteria provide insight into the lifestyles of these microorganisms in soils.</title>
        <authorList>
            <person name="Ward N.L."/>
            <person name="Challacombe J.F."/>
            <person name="Janssen P.H."/>
            <person name="Henrissat B."/>
            <person name="Coutinho P.M."/>
            <person name="Wu M."/>
            <person name="Xie G."/>
            <person name="Haft D.H."/>
            <person name="Sait M."/>
            <person name="Badger J."/>
            <person name="Barabote R.D."/>
            <person name="Bradley B."/>
            <person name="Brettin T.S."/>
            <person name="Brinkac L.M."/>
            <person name="Bruce D."/>
            <person name="Creasy T."/>
            <person name="Daugherty S.C."/>
            <person name="Davidsen T.M."/>
            <person name="DeBoy R.T."/>
            <person name="Detter J.C."/>
            <person name="Dodson R.J."/>
            <person name="Durkin A.S."/>
            <person name="Ganapathy A."/>
            <person name="Gwinn-Giglio M."/>
            <person name="Han C.S."/>
            <person name="Khouri H."/>
            <person name="Kiss H."/>
            <person name="Kothari S.P."/>
            <person name="Madupu R."/>
            <person name="Nelson K.E."/>
            <person name="Nelson W.C."/>
            <person name="Paulsen I."/>
            <person name="Penn K."/>
            <person name="Ren Q."/>
            <person name="Rosovitz M.J."/>
            <person name="Selengut J.D."/>
            <person name="Shrivastava S."/>
            <person name="Sullivan S.A."/>
            <person name="Tapia R."/>
            <person name="Thompson L.S."/>
            <person name="Watkins K.L."/>
            <person name="Yang Q."/>
            <person name="Yu C."/>
            <person name="Zafar N."/>
            <person name="Zhou L."/>
            <person name="Kuske C.R."/>
        </authorList>
    </citation>
    <scope>NUCLEOTIDE SEQUENCE [LARGE SCALE GENOMIC DNA]</scope>
    <source>
        <strain>Ellin345</strain>
    </source>
</reference>
<name>GPDA_KORVE</name>
<evidence type="ECO:0000255" key="1">
    <source>
        <dbReference type="HAMAP-Rule" id="MF_00394"/>
    </source>
</evidence>
<keyword id="KW-0963">Cytoplasm</keyword>
<keyword id="KW-0444">Lipid biosynthesis</keyword>
<keyword id="KW-0443">Lipid metabolism</keyword>
<keyword id="KW-0520">NAD</keyword>
<keyword id="KW-0521">NADP</keyword>
<keyword id="KW-0547">Nucleotide-binding</keyword>
<keyword id="KW-0560">Oxidoreductase</keyword>
<keyword id="KW-0594">Phospholipid biosynthesis</keyword>
<keyword id="KW-1208">Phospholipid metabolism</keyword>
<keyword id="KW-1185">Reference proteome</keyword>
<feature type="chain" id="PRO_0000255273" description="Glycerol-3-phosphate dehydrogenase [NAD(P)+]">
    <location>
        <begin position="1"/>
        <end position="337"/>
    </location>
</feature>
<feature type="active site" description="Proton acceptor" evidence="1">
    <location>
        <position position="193"/>
    </location>
</feature>
<feature type="binding site" evidence="1">
    <location>
        <position position="12"/>
    </location>
    <ligand>
        <name>NADPH</name>
        <dbReference type="ChEBI" id="CHEBI:57783"/>
    </ligand>
</feature>
<feature type="binding site" evidence="1">
    <location>
        <position position="107"/>
    </location>
    <ligand>
        <name>NADPH</name>
        <dbReference type="ChEBI" id="CHEBI:57783"/>
    </ligand>
</feature>
<feature type="binding site" evidence="1">
    <location>
        <position position="107"/>
    </location>
    <ligand>
        <name>sn-glycerol 3-phosphate</name>
        <dbReference type="ChEBI" id="CHEBI:57597"/>
    </ligand>
</feature>
<feature type="binding site" evidence="1">
    <location>
        <position position="138"/>
    </location>
    <ligand>
        <name>sn-glycerol 3-phosphate</name>
        <dbReference type="ChEBI" id="CHEBI:57597"/>
    </ligand>
</feature>
<feature type="binding site" evidence="1">
    <location>
        <position position="140"/>
    </location>
    <ligand>
        <name>sn-glycerol 3-phosphate</name>
        <dbReference type="ChEBI" id="CHEBI:57597"/>
    </ligand>
</feature>
<feature type="binding site" evidence="1">
    <location>
        <position position="142"/>
    </location>
    <ligand>
        <name>NADPH</name>
        <dbReference type="ChEBI" id="CHEBI:57783"/>
    </ligand>
</feature>
<feature type="binding site" evidence="1">
    <location>
        <position position="193"/>
    </location>
    <ligand>
        <name>sn-glycerol 3-phosphate</name>
        <dbReference type="ChEBI" id="CHEBI:57597"/>
    </ligand>
</feature>
<feature type="binding site" evidence="1">
    <location>
        <position position="246"/>
    </location>
    <ligand>
        <name>sn-glycerol 3-phosphate</name>
        <dbReference type="ChEBI" id="CHEBI:57597"/>
    </ligand>
</feature>
<feature type="binding site" evidence="1">
    <location>
        <position position="256"/>
    </location>
    <ligand>
        <name>sn-glycerol 3-phosphate</name>
        <dbReference type="ChEBI" id="CHEBI:57597"/>
    </ligand>
</feature>
<feature type="binding site" evidence="1">
    <location>
        <position position="257"/>
    </location>
    <ligand>
        <name>NADPH</name>
        <dbReference type="ChEBI" id="CHEBI:57783"/>
    </ligand>
</feature>
<feature type="binding site" evidence="1">
    <location>
        <position position="257"/>
    </location>
    <ligand>
        <name>sn-glycerol 3-phosphate</name>
        <dbReference type="ChEBI" id="CHEBI:57597"/>
    </ligand>
</feature>
<feature type="binding site" evidence="1">
    <location>
        <position position="258"/>
    </location>
    <ligand>
        <name>sn-glycerol 3-phosphate</name>
        <dbReference type="ChEBI" id="CHEBI:57597"/>
    </ligand>
</feature>
<feature type="binding site" evidence="1">
    <location>
        <position position="282"/>
    </location>
    <ligand>
        <name>NADPH</name>
        <dbReference type="ChEBI" id="CHEBI:57783"/>
    </ligand>
</feature>
<feature type="binding site" evidence="1">
    <location>
        <position position="284"/>
    </location>
    <ligand>
        <name>NADPH</name>
        <dbReference type="ChEBI" id="CHEBI:57783"/>
    </ligand>
</feature>
<dbReference type="EC" id="1.1.1.94" evidence="1"/>
<dbReference type="EMBL" id="CP000360">
    <property type="protein sequence ID" value="ABF41138.1"/>
    <property type="molecule type" value="Genomic_DNA"/>
</dbReference>
<dbReference type="RefSeq" id="WP_011522939.1">
    <property type="nucleotide sequence ID" value="NC_008009.1"/>
</dbReference>
<dbReference type="SMR" id="Q1IPR2"/>
<dbReference type="STRING" id="204669.Acid345_2137"/>
<dbReference type="EnsemblBacteria" id="ABF41138">
    <property type="protein sequence ID" value="ABF41138"/>
    <property type="gene ID" value="Acid345_2137"/>
</dbReference>
<dbReference type="KEGG" id="aba:Acid345_2137"/>
<dbReference type="eggNOG" id="COG0240">
    <property type="taxonomic scope" value="Bacteria"/>
</dbReference>
<dbReference type="HOGENOM" id="CLU_033449_0_2_0"/>
<dbReference type="OrthoDB" id="9812273at2"/>
<dbReference type="UniPathway" id="UPA00940"/>
<dbReference type="Proteomes" id="UP000002432">
    <property type="component" value="Chromosome"/>
</dbReference>
<dbReference type="GO" id="GO:0005829">
    <property type="term" value="C:cytosol"/>
    <property type="evidence" value="ECO:0007669"/>
    <property type="project" value="TreeGrafter"/>
</dbReference>
<dbReference type="GO" id="GO:0047952">
    <property type="term" value="F:glycerol-3-phosphate dehydrogenase [NAD(P)+] activity"/>
    <property type="evidence" value="ECO:0007669"/>
    <property type="project" value="UniProtKB-UniRule"/>
</dbReference>
<dbReference type="GO" id="GO:0051287">
    <property type="term" value="F:NAD binding"/>
    <property type="evidence" value="ECO:0007669"/>
    <property type="project" value="InterPro"/>
</dbReference>
<dbReference type="GO" id="GO:0005975">
    <property type="term" value="P:carbohydrate metabolic process"/>
    <property type="evidence" value="ECO:0007669"/>
    <property type="project" value="InterPro"/>
</dbReference>
<dbReference type="GO" id="GO:0046167">
    <property type="term" value="P:glycerol-3-phosphate biosynthetic process"/>
    <property type="evidence" value="ECO:0007669"/>
    <property type="project" value="UniProtKB-UniRule"/>
</dbReference>
<dbReference type="GO" id="GO:0046168">
    <property type="term" value="P:glycerol-3-phosphate catabolic process"/>
    <property type="evidence" value="ECO:0007669"/>
    <property type="project" value="InterPro"/>
</dbReference>
<dbReference type="GO" id="GO:0006650">
    <property type="term" value="P:glycerophospholipid metabolic process"/>
    <property type="evidence" value="ECO:0007669"/>
    <property type="project" value="UniProtKB-UniRule"/>
</dbReference>
<dbReference type="GO" id="GO:0008654">
    <property type="term" value="P:phospholipid biosynthetic process"/>
    <property type="evidence" value="ECO:0007669"/>
    <property type="project" value="UniProtKB-KW"/>
</dbReference>
<dbReference type="FunFam" id="1.10.1040.10:FF:000001">
    <property type="entry name" value="Glycerol-3-phosphate dehydrogenase [NAD(P)+]"/>
    <property type="match status" value="1"/>
</dbReference>
<dbReference type="FunFam" id="3.40.50.720:FF:000019">
    <property type="entry name" value="Glycerol-3-phosphate dehydrogenase [NAD(P)+]"/>
    <property type="match status" value="1"/>
</dbReference>
<dbReference type="Gene3D" id="1.10.1040.10">
    <property type="entry name" value="N-(1-d-carboxylethyl)-l-norvaline Dehydrogenase, domain 2"/>
    <property type="match status" value="1"/>
</dbReference>
<dbReference type="Gene3D" id="3.40.50.720">
    <property type="entry name" value="NAD(P)-binding Rossmann-like Domain"/>
    <property type="match status" value="1"/>
</dbReference>
<dbReference type="HAMAP" id="MF_00394">
    <property type="entry name" value="NAD_Glyc3P_dehydrog"/>
    <property type="match status" value="1"/>
</dbReference>
<dbReference type="InterPro" id="IPR008927">
    <property type="entry name" value="6-PGluconate_DH-like_C_sf"/>
</dbReference>
<dbReference type="InterPro" id="IPR013328">
    <property type="entry name" value="6PGD_dom2"/>
</dbReference>
<dbReference type="InterPro" id="IPR006168">
    <property type="entry name" value="G3P_DH_NAD-dep"/>
</dbReference>
<dbReference type="InterPro" id="IPR006109">
    <property type="entry name" value="G3P_DH_NAD-dep_C"/>
</dbReference>
<dbReference type="InterPro" id="IPR011128">
    <property type="entry name" value="G3P_DH_NAD-dep_N"/>
</dbReference>
<dbReference type="InterPro" id="IPR036291">
    <property type="entry name" value="NAD(P)-bd_dom_sf"/>
</dbReference>
<dbReference type="NCBIfam" id="NF000940">
    <property type="entry name" value="PRK00094.1-2"/>
    <property type="match status" value="1"/>
</dbReference>
<dbReference type="NCBIfam" id="NF000942">
    <property type="entry name" value="PRK00094.1-4"/>
    <property type="match status" value="1"/>
</dbReference>
<dbReference type="PANTHER" id="PTHR11728">
    <property type="entry name" value="GLYCEROL-3-PHOSPHATE DEHYDROGENASE"/>
    <property type="match status" value="1"/>
</dbReference>
<dbReference type="PANTHER" id="PTHR11728:SF1">
    <property type="entry name" value="GLYCEROL-3-PHOSPHATE DEHYDROGENASE [NAD(+)] 2, CHLOROPLASTIC"/>
    <property type="match status" value="1"/>
</dbReference>
<dbReference type="Pfam" id="PF07479">
    <property type="entry name" value="NAD_Gly3P_dh_C"/>
    <property type="match status" value="1"/>
</dbReference>
<dbReference type="Pfam" id="PF01210">
    <property type="entry name" value="NAD_Gly3P_dh_N"/>
    <property type="match status" value="1"/>
</dbReference>
<dbReference type="PIRSF" id="PIRSF000114">
    <property type="entry name" value="Glycerol-3-P_dh"/>
    <property type="match status" value="1"/>
</dbReference>
<dbReference type="PRINTS" id="PR00077">
    <property type="entry name" value="GPDHDRGNASE"/>
</dbReference>
<dbReference type="SUPFAM" id="SSF48179">
    <property type="entry name" value="6-phosphogluconate dehydrogenase C-terminal domain-like"/>
    <property type="match status" value="1"/>
</dbReference>
<dbReference type="SUPFAM" id="SSF51735">
    <property type="entry name" value="NAD(P)-binding Rossmann-fold domains"/>
    <property type="match status" value="1"/>
</dbReference>
<dbReference type="PROSITE" id="PS00957">
    <property type="entry name" value="NAD_G3PDH"/>
    <property type="match status" value="1"/>
</dbReference>
<sequence>MSRIAVIGAGAWGTALAIVLGRRGGHAVRLWAYEQEVVASILARRTNDLFLPEASIPATVTVTDSLTDALNGAEIVLSVMPSHHVRRLFTQMLPHLSDDMVFVSATKGVEDQTYLRMTEVIEEVVTPRFSPRLVAVSGPTFAKEVAKGDPTAITAASSDEDLARTVQHEFSDPRFRVYTNRDVVGVELGGALKNVIAIAAGICDGLELGHNSVAALVTRGLAEITRLSLACGGHIETMAGLAGLGDLVLTCTGGLSRNRTVGVELGKGRKLADIIAGMRGMVAEGVLTTNAAIGLANKHGVEMPITQQMHAILHQGKSPSDAIRELMSRPSTTEVWL</sequence>
<comment type="function">
    <text evidence="1">Catalyzes the reduction of the glycolytic intermediate dihydroxyacetone phosphate (DHAP) to sn-glycerol 3-phosphate (G3P), the key precursor for phospholipid synthesis.</text>
</comment>
<comment type="catalytic activity">
    <reaction evidence="1">
        <text>sn-glycerol 3-phosphate + NAD(+) = dihydroxyacetone phosphate + NADH + H(+)</text>
        <dbReference type="Rhea" id="RHEA:11092"/>
        <dbReference type="ChEBI" id="CHEBI:15378"/>
        <dbReference type="ChEBI" id="CHEBI:57540"/>
        <dbReference type="ChEBI" id="CHEBI:57597"/>
        <dbReference type="ChEBI" id="CHEBI:57642"/>
        <dbReference type="ChEBI" id="CHEBI:57945"/>
        <dbReference type="EC" id="1.1.1.94"/>
    </reaction>
    <physiologicalReaction direction="right-to-left" evidence="1">
        <dbReference type="Rhea" id="RHEA:11094"/>
    </physiologicalReaction>
</comment>
<comment type="catalytic activity">
    <reaction evidence="1">
        <text>sn-glycerol 3-phosphate + NADP(+) = dihydroxyacetone phosphate + NADPH + H(+)</text>
        <dbReference type="Rhea" id="RHEA:11096"/>
        <dbReference type="ChEBI" id="CHEBI:15378"/>
        <dbReference type="ChEBI" id="CHEBI:57597"/>
        <dbReference type="ChEBI" id="CHEBI:57642"/>
        <dbReference type="ChEBI" id="CHEBI:57783"/>
        <dbReference type="ChEBI" id="CHEBI:58349"/>
        <dbReference type="EC" id="1.1.1.94"/>
    </reaction>
    <physiologicalReaction direction="right-to-left" evidence="1">
        <dbReference type="Rhea" id="RHEA:11098"/>
    </physiologicalReaction>
</comment>
<comment type="pathway">
    <text evidence="1">Membrane lipid metabolism; glycerophospholipid metabolism.</text>
</comment>
<comment type="subcellular location">
    <subcellularLocation>
        <location evidence="1">Cytoplasm</location>
    </subcellularLocation>
</comment>
<comment type="similarity">
    <text evidence="1">Belongs to the NAD-dependent glycerol-3-phosphate dehydrogenase family.</text>
</comment>
<gene>
    <name evidence="1" type="primary">gpsA</name>
    <name type="ordered locus">Acid345_2137</name>
</gene>
<protein>
    <recommendedName>
        <fullName evidence="1">Glycerol-3-phosphate dehydrogenase [NAD(P)+]</fullName>
        <ecNumber evidence="1">1.1.1.94</ecNumber>
    </recommendedName>
    <alternativeName>
        <fullName evidence="1">NAD(P)(+)-dependent glycerol-3-phosphate dehydrogenase</fullName>
    </alternativeName>
    <alternativeName>
        <fullName evidence="1">NAD(P)H-dependent dihydroxyacetone-phosphate reductase</fullName>
    </alternativeName>
</protein>